<comment type="function">
    <text evidence="1">Catalyzes the reversible transfer of the terminal phosphate group between ATP and AMP. Plays an important role in cellular energy homeostasis and in adenine nucleotide metabolism.</text>
</comment>
<comment type="catalytic activity">
    <reaction evidence="1">
        <text>AMP + ATP = 2 ADP</text>
        <dbReference type="Rhea" id="RHEA:12973"/>
        <dbReference type="ChEBI" id="CHEBI:30616"/>
        <dbReference type="ChEBI" id="CHEBI:456215"/>
        <dbReference type="ChEBI" id="CHEBI:456216"/>
        <dbReference type="EC" id="2.7.4.3"/>
    </reaction>
</comment>
<comment type="pathway">
    <text evidence="1">Purine metabolism; AMP biosynthesis via salvage pathway; AMP from ADP: step 1/1.</text>
</comment>
<comment type="subunit">
    <text evidence="1">Monomer.</text>
</comment>
<comment type="subcellular location">
    <subcellularLocation>
        <location evidence="1">Cytoplasm</location>
    </subcellularLocation>
</comment>
<comment type="domain">
    <text evidence="1">Consists of three domains, a large central CORE domain and two small peripheral domains, NMPbind and LID, which undergo movements during catalysis. The LID domain closes over the site of phosphoryl transfer upon ATP binding. Assembling and dissambling the active center during each catalytic cycle provides an effective means to prevent ATP hydrolysis.</text>
</comment>
<comment type="similarity">
    <text evidence="1">Belongs to the adenylate kinase family.</text>
</comment>
<organism>
    <name type="scientific">Yersinia enterocolitica serotype O:8 / biotype 1B (strain NCTC 13174 / 8081)</name>
    <dbReference type="NCBI Taxonomy" id="393305"/>
    <lineage>
        <taxon>Bacteria</taxon>
        <taxon>Pseudomonadati</taxon>
        <taxon>Pseudomonadota</taxon>
        <taxon>Gammaproteobacteria</taxon>
        <taxon>Enterobacterales</taxon>
        <taxon>Yersiniaceae</taxon>
        <taxon>Yersinia</taxon>
    </lineage>
</organism>
<proteinExistence type="inferred from homology"/>
<sequence length="214" mass="23649">MRIILLGAPGAGKGTQAQFIMEKYGIPQISTGDMLRAAVKAGSELGLKAKEIMDAGKLVTDELVIALVKERITQDDCRDGFLLDGFPRTIPQADAMKEAGIKVDYVLEFDVPDDLIVERIVGRRVHAASGRVYHVKFNPPKVEDKDDVTGEDLTIRKDDQEATVRKRLVEYHQQTAPLVSYYRKEADAGNTQYFKLDGTRKVAEVSAELATILG</sequence>
<feature type="chain" id="PRO_1000058940" description="Adenylate kinase">
    <location>
        <begin position="1"/>
        <end position="214"/>
    </location>
</feature>
<feature type="region of interest" description="NMP" evidence="1">
    <location>
        <begin position="30"/>
        <end position="59"/>
    </location>
</feature>
<feature type="region of interest" description="LID">
    <location>
        <begin position="122"/>
        <end position="159"/>
    </location>
</feature>
<feature type="binding site" evidence="1">
    <location>
        <begin position="10"/>
        <end position="15"/>
    </location>
    <ligand>
        <name>ATP</name>
        <dbReference type="ChEBI" id="CHEBI:30616"/>
    </ligand>
</feature>
<feature type="binding site" evidence="1">
    <location>
        <position position="31"/>
    </location>
    <ligand>
        <name>AMP</name>
        <dbReference type="ChEBI" id="CHEBI:456215"/>
    </ligand>
</feature>
<feature type="binding site" evidence="1">
    <location>
        <position position="36"/>
    </location>
    <ligand>
        <name>AMP</name>
        <dbReference type="ChEBI" id="CHEBI:456215"/>
    </ligand>
</feature>
<feature type="binding site" evidence="1">
    <location>
        <begin position="57"/>
        <end position="59"/>
    </location>
    <ligand>
        <name>AMP</name>
        <dbReference type="ChEBI" id="CHEBI:456215"/>
    </ligand>
</feature>
<feature type="binding site" evidence="1">
    <location>
        <begin position="85"/>
        <end position="88"/>
    </location>
    <ligand>
        <name>AMP</name>
        <dbReference type="ChEBI" id="CHEBI:456215"/>
    </ligand>
</feature>
<feature type="binding site" evidence="1">
    <location>
        <position position="92"/>
    </location>
    <ligand>
        <name>AMP</name>
        <dbReference type="ChEBI" id="CHEBI:456215"/>
    </ligand>
</feature>
<feature type="binding site" evidence="1">
    <location>
        <position position="123"/>
    </location>
    <ligand>
        <name>ATP</name>
        <dbReference type="ChEBI" id="CHEBI:30616"/>
    </ligand>
</feature>
<feature type="binding site" evidence="1">
    <location>
        <begin position="132"/>
        <end position="133"/>
    </location>
    <ligand>
        <name>ATP</name>
        <dbReference type="ChEBI" id="CHEBI:30616"/>
    </ligand>
</feature>
<feature type="binding site" evidence="1">
    <location>
        <position position="156"/>
    </location>
    <ligand>
        <name>AMP</name>
        <dbReference type="ChEBI" id="CHEBI:456215"/>
    </ligand>
</feature>
<feature type="binding site" evidence="1">
    <location>
        <position position="167"/>
    </location>
    <ligand>
        <name>AMP</name>
        <dbReference type="ChEBI" id="CHEBI:456215"/>
    </ligand>
</feature>
<feature type="binding site" evidence="1">
    <location>
        <position position="200"/>
    </location>
    <ligand>
        <name>ATP</name>
        <dbReference type="ChEBI" id="CHEBI:30616"/>
    </ligand>
</feature>
<keyword id="KW-0067">ATP-binding</keyword>
<keyword id="KW-0963">Cytoplasm</keyword>
<keyword id="KW-0418">Kinase</keyword>
<keyword id="KW-0545">Nucleotide biosynthesis</keyword>
<keyword id="KW-0547">Nucleotide-binding</keyword>
<keyword id="KW-0808">Transferase</keyword>
<accession>A1JNB1</accession>
<protein>
    <recommendedName>
        <fullName evidence="1">Adenylate kinase</fullName>
        <shortName evidence="1">AK</shortName>
        <ecNumber evidence="1">2.7.4.3</ecNumber>
    </recommendedName>
    <alternativeName>
        <fullName evidence="1">ATP-AMP transphosphorylase</fullName>
    </alternativeName>
    <alternativeName>
        <fullName evidence="1">ATP:AMP phosphotransferase</fullName>
    </alternativeName>
    <alternativeName>
        <fullName evidence="1">Adenylate monophosphate kinase</fullName>
    </alternativeName>
</protein>
<name>KAD_YERE8</name>
<dbReference type="EC" id="2.7.4.3" evidence="1"/>
<dbReference type="EMBL" id="AM286415">
    <property type="protein sequence ID" value="CAL13124.1"/>
    <property type="molecule type" value="Genomic_DNA"/>
</dbReference>
<dbReference type="RefSeq" id="WP_011816875.1">
    <property type="nucleotide sequence ID" value="NC_008800.1"/>
</dbReference>
<dbReference type="RefSeq" id="YP_001007271.1">
    <property type="nucleotide sequence ID" value="NC_008800.1"/>
</dbReference>
<dbReference type="SMR" id="A1JNB1"/>
<dbReference type="KEGG" id="yen:YE3089"/>
<dbReference type="PATRIC" id="fig|393305.7.peg.3286"/>
<dbReference type="eggNOG" id="COG0563">
    <property type="taxonomic scope" value="Bacteria"/>
</dbReference>
<dbReference type="HOGENOM" id="CLU_032354_1_2_6"/>
<dbReference type="OrthoDB" id="9805030at2"/>
<dbReference type="UniPathway" id="UPA00588">
    <property type="reaction ID" value="UER00649"/>
</dbReference>
<dbReference type="Proteomes" id="UP000000642">
    <property type="component" value="Chromosome"/>
</dbReference>
<dbReference type="GO" id="GO:0005737">
    <property type="term" value="C:cytoplasm"/>
    <property type="evidence" value="ECO:0007669"/>
    <property type="project" value="UniProtKB-SubCell"/>
</dbReference>
<dbReference type="GO" id="GO:0004017">
    <property type="term" value="F:adenylate kinase activity"/>
    <property type="evidence" value="ECO:0007669"/>
    <property type="project" value="UniProtKB-UniRule"/>
</dbReference>
<dbReference type="GO" id="GO:0005524">
    <property type="term" value="F:ATP binding"/>
    <property type="evidence" value="ECO:0007669"/>
    <property type="project" value="UniProtKB-UniRule"/>
</dbReference>
<dbReference type="GO" id="GO:0044209">
    <property type="term" value="P:AMP salvage"/>
    <property type="evidence" value="ECO:0007669"/>
    <property type="project" value="UniProtKB-UniRule"/>
</dbReference>
<dbReference type="CDD" id="cd01428">
    <property type="entry name" value="ADK"/>
    <property type="match status" value="1"/>
</dbReference>
<dbReference type="FunFam" id="3.40.50.300:FF:000106">
    <property type="entry name" value="Adenylate kinase mitochondrial"/>
    <property type="match status" value="1"/>
</dbReference>
<dbReference type="Gene3D" id="3.40.50.300">
    <property type="entry name" value="P-loop containing nucleotide triphosphate hydrolases"/>
    <property type="match status" value="1"/>
</dbReference>
<dbReference type="HAMAP" id="MF_00235">
    <property type="entry name" value="Adenylate_kinase_Adk"/>
    <property type="match status" value="1"/>
</dbReference>
<dbReference type="InterPro" id="IPR006259">
    <property type="entry name" value="Adenyl_kin_sub"/>
</dbReference>
<dbReference type="InterPro" id="IPR000850">
    <property type="entry name" value="Adenylat/UMP-CMP_kin"/>
</dbReference>
<dbReference type="InterPro" id="IPR033690">
    <property type="entry name" value="Adenylat_kinase_CS"/>
</dbReference>
<dbReference type="InterPro" id="IPR007862">
    <property type="entry name" value="Adenylate_kinase_lid-dom"/>
</dbReference>
<dbReference type="InterPro" id="IPR027417">
    <property type="entry name" value="P-loop_NTPase"/>
</dbReference>
<dbReference type="NCBIfam" id="TIGR01351">
    <property type="entry name" value="adk"/>
    <property type="match status" value="1"/>
</dbReference>
<dbReference type="NCBIfam" id="NF001379">
    <property type="entry name" value="PRK00279.1-1"/>
    <property type="match status" value="1"/>
</dbReference>
<dbReference type="NCBIfam" id="NF001380">
    <property type="entry name" value="PRK00279.1-2"/>
    <property type="match status" value="1"/>
</dbReference>
<dbReference type="NCBIfam" id="NF001381">
    <property type="entry name" value="PRK00279.1-3"/>
    <property type="match status" value="1"/>
</dbReference>
<dbReference type="NCBIfam" id="NF011100">
    <property type="entry name" value="PRK14527.1"/>
    <property type="match status" value="1"/>
</dbReference>
<dbReference type="PANTHER" id="PTHR23359">
    <property type="entry name" value="NUCLEOTIDE KINASE"/>
    <property type="match status" value="1"/>
</dbReference>
<dbReference type="Pfam" id="PF00406">
    <property type="entry name" value="ADK"/>
    <property type="match status" value="1"/>
</dbReference>
<dbReference type="Pfam" id="PF05191">
    <property type="entry name" value="ADK_lid"/>
    <property type="match status" value="1"/>
</dbReference>
<dbReference type="PRINTS" id="PR00094">
    <property type="entry name" value="ADENYLTKNASE"/>
</dbReference>
<dbReference type="SUPFAM" id="SSF52540">
    <property type="entry name" value="P-loop containing nucleoside triphosphate hydrolases"/>
    <property type="match status" value="1"/>
</dbReference>
<dbReference type="PROSITE" id="PS00113">
    <property type="entry name" value="ADENYLATE_KINASE"/>
    <property type="match status" value="1"/>
</dbReference>
<gene>
    <name evidence="1" type="primary">adk</name>
    <name type="ordered locus">YE3089</name>
</gene>
<evidence type="ECO:0000255" key="1">
    <source>
        <dbReference type="HAMAP-Rule" id="MF_00235"/>
    </source>
</evidence>
<reference key="1">
    <citation type="journal article" date="2006" name="PLoS Genet.">
        <title>The complete genome sequence and comparative genome analysis of the high pathogenicity Yersinia enterocolitica strain 8081.</title>
        <authorList>
            <person name="Thomson N.R."/>
            <person name="Howard S."/>
            <person name="Wren B.W."/>
            <person name="Holden M.T.G."/>
            <person name="Crossman L."/>
            <person name="Challis G.L."/>
            <person name="Churcher C."/>
            <person name="Mungall K."/>
            <person name="Brooks K."/>
            <person name="Chillingworth T."/>
            <person name="Feltwell T."/>
            <person name="Abdellah Z."/>
            <person name="Hauser H."/>
            <person name="Jagels K."/>
            <person name="Maddison M."/>
            <person name="Moule S."/>
            <person name="Sanders M."/>
            <person name="Whitehead S."/>
            <person name="Quail M.A."/>
            <person name="Dougan G."/>
            <person name="Parkhill J."/>
            <person name="Prentice M.B."/>
        </authorList>
    </citation>
    <scope>NUCLEOTIDE SEQUENCE [LARGE SCALE GENOMIC DNA]</scope>
    <source>
        <strain>NCTC 13174 / 8081</strain>
    </source>
</reference>